<accession>Q4L4W6</accession>
<comment type="function">
    <text evidence="1">Mnh complex is a Na(+)/H(+) antiporter involved in Na(+) excretion.</text>
</comment>
<comment type="subunit">
    <text evidence="1">May form a heterooligomeric complex that consists of seven subunits: mnhA1, mnhB1, mnhC1, mnhD1, mnhE1, mnhF1 and mnhG1.</text>
</comment>
<comment type="subcellular location">
    <subcellularLocation>
        <location evidence="3">Cell membrane</location>
        <topology evidence="3">Multi-pass membrane protein</topology>
    </subcellularLocation>
</comment>
<comment type="similarity">
    <text evidence="3">Belongs to the CPA3 antiporters (TC 2.A.63) subunit B family.</text>
</comment>
<gene>
    <name type="primary">mnhB1</name>
    <name type="ordered locus">SH2000</name>
</gene>
<feature type="chain" id="PRO_0000372115" description="Na(+)/H(+) antiporter subunit B1">
    <location>
        <begin position="1"/>
        <end position="142"/>
    </location>
</feature>
<feature type="transmembrane region" description="Helical" evidence="2">
    <location>
        <begin position="12"/>
        <end position="32"/>
    </location>
</feature>
<feature type="transmembrane region" description="Helical" evidence="2">
    <location>
        <begin position="37"/>
        <end position="57"/>
    </location>
</feature>
<feature type="transmembrane region" description="Helical" evidence="2">
    <location>
        <begin position="72"/>
        <end position="92"/>
    </location>
</feature>
<feature type="transmembrane region" description="Helical" evidence="2">
    <location>
        <begin position="118"/>
        <end position="138"/>
    </location>
</feature>
<keyword id="KW-0050">Antiport</keyword>
<keyword id="KW-1003">Cell membrane</keyword>
<keyword id="KW-0375">Hydrogen ion transport</keyword>
<keyword id="KW-0406">Ion transport</keyword>
<keyword id="KW-0472">Membrane</keyword>
<keyword id="KW-0915">Sodium</keyword>
<keyword id="KW-0739">Sodium transport</keyword>
<keyword id="KW-0812">Transmembrane</keyword>
<keyword id="KW-1133">Transmembrane helix</keyword>
<keyword id="KW-0813">Transport</keyword>
<protein>
    <recommendedName>
        <fullName>Na(+)/H(+) antiporter subunit B1</fullName>
    </recommendedName>
    <alternativeName>
        <fullName>Mnh complex subunit B1</fullName>
    </alternativeName>
</protein>
<dbReference type="EMBL" id="AP006716">
    <property type="protein sequence ID" value="BAE05309.1"/>
    <property type="molecule type" value="Genomic_DNA"/>
</dbReference>
<dbReference type="RefSeq" id="WP_011276267.1">
    <property type="nucleotide sequence ID" value="NC_007168.1"/>
</dbReference>
<dbReference type="SMR" id="Q4L4W6"/>
<dbReference type="KEGG" id="sha:SH2000"/>
<dbReference type="eggNOG" id="COG2111">
    <property type="taxonomic scope" value="Bacteria"/>
</dbReference>
<dbReference type="HOGENOM" id="CLU_101659_1_1_9"/>
<dbReference type="OrthoDB" id="9798859at2"/>
<dbReference type="Proteomes" id="UP000000543">
    <property type="component" value="Chromosome"/>
</dbReference>
<dbReference type="GO" id="GO:0005886">
    <property type="term" value="C:plasma membrane"/>
    <property type="evidence" value="ECO:0007669"/>
    <property type="project" value="UniProtKB-SubCell"/>
</dbReference>
<dbReference type="GO" id="GO:0015297">
    <property type="term" value="F:antiporter activity"/>
    <property type="evidence" value="ECO:0007669"/>
    <property type="project" value="UniProtKB-KW"/>
</dbReference>
<dbReference type="GO" id="GO:0008324">
    <property type="term" value="F:monoatomic cation transmembrane transporter activity"/>
    <property type="evidence" value="ECO:0007669"/>
    <property type="project" value="InterPro"/>
</dbReference>
<dbReference type="GO" id="GO:1902600">
    <property type="term" value="P:proton transmembrane transport"/>
    <property type="evidence" value="ECO:0007669"/>
    <property type="project" value="UniProtKB-KW"/>
</dbReference>
<dbReference type="GO" id="GO:0006814">
    <property type="term" value="P:sodium ion transport"/>
    <property type="evidence" value="ECO:0007669"/>
    <property type="project" value="UniProtKB-KW"/>
</dbReference>
<dbReference type="InterPro" id="IPR050622">
    <property type="entry name" value="CPA3_antiporter_subunitB"/>
</dbReference>
<dbReference type="InterPro" id="IPR005281">
    <property type="entry name" value="CPA3_sub_B"/>
</dbReference>
<dbReference type="InterPro" id="IPR007182">
    <property type="entry name" value="MnhB"/>
</dbReference>
<dbReference type="NCBIfam" id="TIGR00943">
    <property type="entry name" value="2a6301s02"/>
    <property type="match status" value="1"/>
</dbReference>
<dbReference type="NCBIfam" id="NF009223">
    <property type="entry name" value="PRK12573.1"/>
    <property type="match status" value="1"/>
</dbReference>
<dbReference type="PANTHER" id="PTHR33932">
    <property type="entry name" value="NA(+)/H(+) ANTIPORTER SUBUNIT B"/>
    <property type="match status" value="1"/>
</dbReference>
<dbReference type="PANTHER" id="PTHR33932:SF4">
    <property type="entry name" value="NA(+)_H(+) ANTIPORTER SUBUNIT B"/>
    <property type="match status" value="1"/>
</dbReference>
<dbReference type="Pfam" id="PF04039">
    <property type="entry name" value="MnhB"/>
    <property type="match status" value="1"/>
</dbReference>
<sequence length="142" mass="15695">MNRQNNNLMFQYAAVIIAFLIALFGVTLFFAGHYTPGGGFVGGLLLSCALTIIAIAFDIKTMEKVFPWDFKILIGIGLLFCVATPLASWFYGENFFTHTEFNIPLPLLQPVHMNTPMFFDFGVLCAVVGTIMTIIITIGESE</sequence>
<name>MNHB1_STAHJ</name>
<proteinExistence type="inferred from homology"/>
<reference key="1">
    <citation type="journal article" date="2005" name="J. Bacteriol.">
        <title>Whole-genome sequencing of Staphylococcus haemolyticus uncovers the extreme plasticity of its genome and the evolution of human-colonizing staphylococcal species.</title>
        <authorList>
            <person name="Takeuchi F."/>
            <person name="Watanabe S."/>
            <person name="Baba T."/>
            <person name="Yuzawa H."/>
            <person name="Ito T."/>
            <person name="Morimoto Y."/>
            <person name="Kuroda M."/>
            <person name="Cui L."/>
            <person name="Takahashi M."/>
            <person name="Ankai A."/>
            <person name="Baba S."/>
            <person name="Fukui S."/>
            <person name="Lee J.C."/>
            <person name="Hiramatsu K."/>
        </authorList>
    </citation>
    <scope>NUCLEOTIDE SEQUENCE [LARGE SCALE GENOMIC DNA]</scope>
    <source>
        <strain>JCSC1435</strain>
    </source>
</reference>
<evidence type="ECO:0000250" key="1"/>
<evidence type="ECO:0000255" key="2"/>
<evidence type="ECO:0000305" key="3"/>
<organism>
    <name type="scientific">Staphylococcus haemolyticus (strain JCSC1435)</name>
    <dbReference type="NCBI Taxonomy" id="279808"/>
    <lineage>
        <taxon>Bacteria</taxon>
        <taxon>Bacillati</taxon>
        <taxon>Bacillota</taxon>
        <taxon>Bacilli</taxon>
        <taxon>Bacillales</taxon>
        <taxon>Staphylococcaceae</taxon>
        <taxon>Staphylococcus</taxon>
    </lineage>
</organism>